<proteinExistence type="inferred from homology"/>
<organism>
    <name type="scientific">Corynebacterium diphtheriae (strain ATCC 700971 / NCTC 13129 / Biotype gravis)</name>
    <dbReference type="NCBI Taxonomy" id="257309"/>
    <lineage>
        <taxon>Bacteria</taxon>
        <taxon>Bacillati</taxon>
        <taxon>Actinomycetota</taxon>
        <taxon>Actinomycetes</taxon>
        <taxon>Mycobacteriales</taxon>
        <taxon>Corynebacteriaceae</taxon>
        <taxon>Corynebacterium</taxon>
    </lineage>
</organism>
<protein>
    <recommendedName>
        <fullName evidence="1">Homoserine O-acetyltransferase</fullName>
        <shortName evidence="1">HAT</shortName>
        <ecNumber evidence="1">2.3.1.31</ecNumber>
    </recommendedName>
    <alternativeName>
        <fullName evidence="1">Homoserine transacetylase</fullName>
        <shortName evidence="1">HTA</shortName>
    </alternativeName>
</protein>
<dbReference type="EC" id="2.3.1.31" evidence="1"/>
<dbReference type="EMBL" id="BX248355">
    <property type="protein sequence ID" value="CAE49140.1"/>
    <property type="molecule type" value="Genomic_DNA"/>
</dbReference>
<dbReference type="SMR" id="Q6NIZ3"/>
<dbReference type="STRING" id="257309.DIP0623"/>
<dbReference type="ESTHER" id="cordi-q6niz3">
    <property type="family name" value="Homoserine_transacetylase"/>
</dbReference>
<dbReference type="KEGG" id="cdi:DIP0623"/>
<dbReference type="HOGENOM" id="CLU_028760_1_0_11"/>
<dbReference type="UniPathway" id="UPA00051">
    <property type="reaction ID" value="UER00074"/>
</dbReference>
<dbReference type="Proteomes" id="UP000002198">
    <property type="component" value="Chromosome"/>
</dbReference>
<dbReference type="GO" id="GO:0005737">
    <property type="term" value="C:cytoplasm"/>
    <property type="evidence" value="ECO:0007669"/>
    <property type="project" value="UniProtKB-SubCell"/>
</dbReference>
<dbReference type="GO" id="GO:0004414">
    <property type="term" value="F:homoserine O-acetyltransferase activity"/>
    <property type="evidence" value="ECO:0007669"/>
    <property type="project" value="UniProtKB-UniRule"/>
</dbReference>
<dbReference type="GO" id="GO:0009092">
    <property type="term" value="P:homoserine metabolic process"/>
    <property type="evidence" value="ECO:0007669"/>
    <property type="project" value="TreeGrafter"/>
</dbReference>
<dbReference type="GO" id="GO:0009086">
    <property type="term" value="P:methionine biosynthetic process"/>
    <property type="evidence" value="ECO:0007669"/>
    <property type="project" value="UniProtKB-UniRule"/>
</dbReference>
<dbReference type="Gene3D" id="3.40.50.1820">
    <property type="entry name" value="alpha/beta hydrolase"/>
    <property type="match status" value="1"/>
</dbReference>
<dbReference type="HAMAP" id="MF_00296">
    <property type="entry name" value="MetX_acyltransf"/>
    <property type="match status" value="1"/>
</dbReference>
<dbReference type="InterPro" id="IPR000073">
    <property type="entry name" value="AB_hydrolase_1"/>
</dbReference>
<dbReference type="InterPro" id="IPR029058">
    <property type="entry name" value="AB_hydrolase_fold"/>
</dbReference>
<dbReference type="InterPro" id="IPR008220">
    <property type="entry name" value="HAT_MetX-like"/>
</dbReference>
<dbReference type="NCBIfam" id="TIGR01392">
    <property type="entry name" value="homoserO_Ac_trn"/>
    <property type="match status" value="1"/>
</dbReference>
<dbReference type="NCBIfam" id="NF001209">
    <property type="entry name" value="PRK00175.1"/>
    <property type="match status" value="1"/>
</dbReference>
<dbReference type="PANTHER" id="PTHR32268">
    <property type="entry name" value="HOMOSERINE O-ACETYLTRANSFERASE"/>
    <property type="match status" value="1"/>
</dbReference>
<dbReference type="PANTHER" id="PTHR32268:SF11">
    <property type="entry name" value="HOMOSERINE O-ACETYLTRANSFERASE"/>
    <property type="match status" value="1"/>
</dbReference>
<dbReference type="Pfam" id="PF00561">
    <property type="entry name" value="Abhydrolase_1"/>
    <property type="match status" value="1"/>
</dbReference>
<dbReference type="PIRSF" id="PIRSF000443">
    <property type="entry name" value="Homoser_Ac_trans"/>
    <property type="match status" value="1"/>
</dbReference>
<dbReference type="SUPFAM" id="SSF53474">
    <property type="entry name" value="alpha/beta-Hydrolases"/>
    <property type="match status" value="1"/>
</dbReference>
<keyword id="KW-0012">Acyltransferase</keyword>
<keyword id="KW-0028">Amino-acid biosynthesis</keyword>
<keyword id="KW-0963">Cytoplasm</keyword>
<keyword id="KW-0486">Methionine biosynthesis</keyword>
<keyword id="KW-1185">Reference proteome</keyword>
<keyword id="KW-0808">Transferase</keyword>
<accession>Q6NIZ3</accession>
<gene>
    <name evidence="1" type="primary">metXA</name>
    <name type="ordered locus">DIP0623</name>
</gene>
<reference key="1">
    <citation type="journal article" date="2003" name="Nucleic Acids Res.">
        <title>The complete genome sequence and analysis of Corynebacterium diphtheriae NCTC13129.</title>
        <authorList>
            <person name="Cerdeno-Tarraga A.-M."/>
            <person name="Efstratiou A."/>
            <person name="Dover L.G."/>
            <person name="Holden M.T.G."/>
            <person name="Pallen M.J."/>
            <person name="Bentley S.D."/>
            <person name="Besra G.S."/>
            <person name="Churcher C.M."/>
            <person name="James K.D."/>
            <person name="De Zoysa A."/>
            <person name="Chillingworth T."/>
            <person name="Cronin A."/>
            <person name="Dowd L."/>
            <person name="Feltwell T."/>
            <person name="Hamlin N."/>
            <person name="Holroyd S."/>
            <person name="Jagels K."/>
            <person name="Moule S."/>
            <person name="Quail M.A."/>
            <person name="Rabbinowitsch E."/>
            <person name="Rutherford K.M."/>
            <person name="Thomson N.R."/>
            <person name="Unwin L."/>
            <person name="Whitehead S."/>
            <person name="Barrell B.G."/>
            <person name="Parkhill J."/>
        </authorList>
    </citation>
    <scope>NUCLEOTIDE SEQUENCE [LARGE SCALE GENOMIC DNA]</scope>
    <source>
        <strain>ATCC 700971 / NCTC 13129 / Biotype gravis</strain>
    </source>
</reference>
<name>METXA_CORDI</name>
<evidence type="ECO:0000255" key="1">
    <source>
        <dbReference type="HAMAP-Rule" id="MF_00296"/>
    </source>
</evidence>
<sequence length="367" mass="40280">MLTTTGTLTHQKIGDFYTEAGATLHDVTIAYQAWGHYTGTNLIVLEHALTGDSNAISWWDGLIGPGKALDTNRYCILCTNVLGGCKGSTGPSSPHPDGKPWGSRFPALSIRDLVNAEKQLFDHLGINKIHAIIGGSMGGARTLEWAALHPHMMTTGFVIAVSARASAWQIGIQTAQISAIELDPHWNGGDYYSGHAPWEGIAAARRIAHLTYRGELEIDERFGTSAQHGENPLGPFRDPHQRFAVTSYLQHQGIKLAQRFDAGSYVVLTEALNRHDIGRGRGGLNKALSAITVPIMIAGVDTDILYPYHQQEHLSRNLGNLLAMAKISSPVGHDAFLTEFRQMERILRHFMELSEGIDDSFRTKLER</sequence>
<comment type="function">
    <text evidence="1">Transfers an acetyl group from acetyl-CoA to L-homoserine, forming acetyl-L-homoserine.</text>
</comment>
<comment type="catalytic activity">
    <reaction evidence="1">
        <text>L-homoserine + acetyl-CoA = O-acetyl-L-homoserine + CoA</text>
        <dbReference type="Rhea" id="RHEA:13701"/>
        <dbReference type="ChEBI" id="CHEBI:57287"/>
        <dbReference type="ChEBI" id="CHEBI:57288"/>
        <dbReference type="ChEBI" id="CHEBI:57476"/>
        <dbReference type="ChEBI" id="CHEBI:57716"/>
        <dbReference type="EC" id="2.3.1.31"/>
    </reaction>
</comment>
<comment type="pathway">
    <text evidence="1">Amino-acid biosynthesis; L-methionine biosynthesis via de novo pathway; O-acetyl-L-homoserine from L-homoserine: step 1/1.</text>
</comment>
<comment type="subunit">
    <text evidence="1">Homodimer.</text>
</comment>
<comment type="subcellular location">
    <subcellularLocation>
        <location evidence="1">Cytoplasm</location>
    </subcellularLocation>
</comment>
<comment type="similarity">
    <text evidence="1">Belongs to the AB hydrolase superfamily. MetX family.</text>
</comment>
<feature type="chain" id="PRO_0000155713" description="Homoserine O-acetyltransferase">
    <location>
        <begin position="1"/>
        <end position="367"/>
    </location>
</feature>
<feature type="domain" description="AB hydrolase-1" evidence="1">
    <location>
        <begin position="41"/>
        <end position="339"/>
    </location>
</feature>
<feature type="active site" description="Nucleophile" evidence="1">
    <location>
        <position position="136"/>
    </location>
</feature>
<feature type="active site" evidence="1">
    <location>
        <position position="303"/>
    </location>
</feature>
<feature type="active site" evidence="1">
    <location>
        <position position="333"/>
    </location>
</feature>
<feature type="binding site" evidence="1">
    <location>
        <position position="205"/>
    </location>
    <ligand>
        <name>substrate</name>
    </ligand>
</feature>
<feature type="binding site" evidence="1">
    <location>
        <position position="334"/>
    </location>
    <ligand>
        <name>substrate</name>
    </ligand>
</feature>